<sequence length="356" mass="39324">MRVADFSFELPEALIAHYPQPQRSGCRLLSLDGPTGTLTHGIFTDLLDKLAPGDLLVFNNTRVIPARLFGRKASGGKLEVLVERVLDDHRVLAHVKASKAPKPGAELLLGDDESIRATMLARHDTLFELRFDDERDVFTILNAVGHMPLPPYIDRPDEDADRELYQTVYSQRPGAVAAPTAGLHFDEPMLAALQEKGIEMAFVTLHVGAGTFQPVRVDTIEDHIMHSEYAEVPQEVVDAVLACKARGKRVVAVGTTSVRSLESAAKAAENGLIAPFFGDTRIFIYPGYHYQVVDALVTNFHLPESTLIMLVSAFAGYKNTMNAYQQAVAEQYRFFSYGDAMFISRNPRAPQEKVSP</sequence>
<keyword id="KW-0963">Cytoplasm</keyword>
<keyword id="KW-0671">Queuosine biosynthesis</keyword>
<keyword id="KW-0949">S-adenosyl-L-methionine</keyword>
<keyword id="KW-0808">Transferase</keyword>
<comment type="function">
    <text evidence="1">Transfers and isomerizes the ribose moiety from AdoMet to the 7-aminomethyl group of 7-deazaguanine (preQ1-tRNA) to give epoxyqueuosine (oQ-tRNA).</text>
</comment>
<comment type="catalytic activity">
    <reaction evidence="1">
        <text>7-aminomethyl-7-carbaguanosine(34) in tRNA + S-adenosyl-L-methionine = epoxyqueuosine(34) in tRNA + adenine + L-methionine + 2 H(+)</text>
        <dbReference type="Rhea" id="RHEA:32155"/>
        <dbReference type="Rhea" id="RHEA-COMP:10342"/>
        <dbReference type="Rhea" id="RHEA-COMP:18582"/>
        <dbReference type="ChEBI" id="CHEBI:15378"/>
        <dbReference type="ChEBI" id="CHEBI:16708"/>
        <dbReference type="ChEBI" id="CHEBI:57844"/>
        <dbReference type="ChEBI" id="CHEBI:59789"/>
        <dbReference type="ChEBI" id="CHEBI:82833"/>
        <dbReference type="ChEBI" id="CHEBI:194443"/>
        <dbReference type="EC" id="2.4.99.17"/>
    </reaction>
</comment>
<comment type="pathway">
    <text evidence="1">tRNA modification; tRNA-queuosine biosynthesis.</text>
</comment>
<comment type="subunit">
    <text evidence="1">Monomer.</text>
</comment>
<comment type="subcellular location">
    <subcellularLocation>
        <location evidence="1">Cytoplasm</location>
    </subcellularLocation>
</comment>
<comment type="similarity">
    <text evidence="1">Belongs to the QueA family.</text>
</comment>
<reference key="1">
    <citation type="journal article" date="2010" name="J. Bacteriol.">
        <title>Genome sequence of the deep-rooted Yersinia pestis strain Angola reveals new insights into the evolution and pangenome of the plague bacterium.</title>
        <authorList>
            <person name="Eppinger M."/>
            <person name="Worsham P.L."/>
            <person name="Nikolich M.P."/>
            <person name="Riley D.R."/>
            <person name="Sebastian Y."/>
            <person name="Mou S."/>
            <person name="Achtman M."/>
            <person name="Lindler L.E."/>
            <person name="Ravel J."/>
        </authorList>
    </citation>
    <scope>NUCLEOTIDE SEQUENCE [LARGE SCALE GENOMIC DNA]</scope>
    <source>
        <strain>Angola</strain>
    </source>
</reference>
<protein>
    <recommendedName>
        <fullName evidence="1">S-adenosylmethionine:tRNA ribosyltransferase-isomerase</fullName>
        <ecNumber evidence="1">2.4.99.17</ecNumber>
    </recommendedName>
    <alternativeName>
        <fullName evidence="1">Queuosine biosynthesis protein QueA</fullName>
    </alternativeName>
</protein>
<accession>A9R352</accession>
<feature type="chain" id="PRO_1000094834" description="S-adenosylmethionine:tRNA ribosyltransferase-isomerase">
    <location>
        <begin position="1"/>
        <end position="356"/>
    </location>
</feature>
<proteinExistence type="inferred from homology"/>
<dbReference type="EC" id="2.4.99.17" evidence="1"/>
<dbReference type="EMBL" id="CP000901">
    <property type="protein sequence ID" value="ABX86338.1"/>
    <property type="molecule type" value="Genomic_DNA"/>
</dbReference>
<dbReference type="RefSeq" id="WP_002208673.1">
    <property type="nucleotide sequence ID" value="NZ_CP009935.1"/>
</dbReference>
<dbReference type="SMR" id="A9R352"/>
<dbReference type="GeneID" id="57975521"/>
<dbReference type="KEGG" id="ypg:YpAngola_A3385"/>
<dbReference type="PATRIC" id="fig|349746.12.peg.85"/>
<dbReference type="UniPathway" id="UPA00392"/>
<dbReference type="GO" id="GO:0005737">
    <property type="term" value="C:cytoplasm"/>
    <property type="evidence" value="ECO:0007669"/>
    <property type="project" value="UniProtKB-SubCell"/>
</dbReference>
<dbReference type="GO" id="GO:0051075">
    <property type="term" value="F:S-adenosylmethionine:tRNA ribosyltransferase-isomerase activity"/>
    <property type="evidence" value="ECO:0007669"/>
    <property type="project" value="UniProtKB-EC"/>
</dbReference>
<dbReference type="GO" id="GO:0008616">
    <property type="term" value="P:queuosine biosynthetic process"/>
    <property type="evidence" value="ECO:0007669"/>
    <property type="project" value="UniProtKB-UniRule"/>
</dbReference>
<dbReference type="GO" id="GO:0002099">
    <property type="term" value="P:tRNA wobble guanine modification"/>
    <property type="evidence" value="ECO:0007669"/>
    <property type="project" value="TreeGrafter"/>
</dbReference>
<dbReference type="FunFam" id="2.40.10.240:FF:000001">
    <property type="entry name" value="S-adenosylmethionine:tRNA ribosyltransferase-isomerase"/>
    <property type="match status" value="1"/>
</dbReference>
<dbReference type="FunFam" id="3.40.1780.10:FF:000001">
    <property type="entry name" value="S-adenosylmethionine:tRNA ribosyltransferase-isomerase"/>
    <property type="match status" value="1"/>
</dbReference>
<dbReference type="Gene3D" id="2.40.10.240">
    <property type="entry name" value="QueA-like"/>
    <property type="match status" value="1"/>
</dbReference>
<dbReference type="Gene3D" id="3.40.1780.10">
    <property type="entry name" value="QueA-like"/>
    <property type="match status" value="1"/>
</dbReference>
<dbReference type="HAMAP" id="MF_00113">
    <property type="entry name" value="QueA"/>
    <property type="match status" value="1"/>
</dbReference>
<dbReference type="InterPro" id="IPR003699">
    <property type="entry name" value="QueA"/>
</dbReference>
<dbReference type="InterPro" id="IPR042118">
    <property type="entry name" value="QueA_dom1"/>
</dbReference>
<dbReference type="InterPro" id="IPR042119">
    <property type="entry name" value="QueA_dom2"/>
</dbReference>
<dbReference type="InterPro" id="IPR036100">
    <property type="entry name" value="QueA_sf"/>
</dbReference>
<dbReference type="NCBIfam" id="NF001140">
    <property type="entry name" value="PRK00147.1"/>
    <property type="match status" value="1"/>
</dbReference>
<dbReference type="NCBIfam" id="TIGR00113">
    <property type="entry name" value="queA"/>
    <property type="match status" value="1"/>
</dbReference>
<dbReference type="PANTHER" id="PTHR30307">
    <property type="entry name" value="S-ADENOSYLMETHIONINE:TRNA RIBOSYLTRANSFERASE-ISOMERASE"/>
    <property type="match status" value="1"/>
</dbReference>
<dbReference type="PANTHER" id="PTHR30307:SF0">
    <property type="entry name" value="S-ADENOSYLMETHIONINE:TRNA RIBOSYLTRANSFERASE-ISOMERASE"/>
    <property type="match status" value="1"/>
</dbReference>
<dbReference type="Pfam" id="PF02547">
    <property type="entry name" value="Queuosine_synth"/>
    <property type="match status" value="1"/>
</dbReference>
<dbReference type="SUPFAM" id="SSF111337">
    <property type="entry name" value="QueA-like"/>
    <property type="match status" value="1"/>
</dbReference>
<name>QUEA_YERPG</name>
<gene>
    <name evidence="1" type="primary">queA</name>
    <name type="ordered locus">YpAngola_A3385</name>
</gene>
<organism>
    <name type="scientific">Yersinia pestis bv. Antiqua (strain Angola)</name>
    <dbReference type="NCBI Taxonomy" id="349746"/>
    <lineage>
        <taxon>Bacteria</taxon>
        <taxon>Pseudomonadati</taxon>
        <taxon>Pseudomonadota</taxon>
        <taxon>Gammaproteobacteria</taxon>
        <taxon>Enterobacterales</taxon>
        <taxon>Yersiniaceae</taxon>
        <taxon>Yersinia</taxon>
    </lineage>
</organism>
<evidence type="ECO:0000255" key="1">
    <source>
        <dbReference type="HAMAP-Rule" id="MF_00113"/>
    </source>
</evidence>